<name>KSL4_ISORU</name>
<protein>
    <recommendedName>
        <fullName evidence="6">Ent-atiserene synthase KSL4, chloroplastic</fullName>
        <ecNumber evidence="4">4.2.3.185</ecNumber>
    </recommendedName>
    <alternativeName>
        <fullName evidence="5">Kaurene synthase 4</fullName>
        <shortName evidence="5">IrKSL4</shortName>
    </alternativeName>
</protein>
<organism>
    <name type="scientific">Isodon rubescens</name>
    <name type="common">Rabdosia rubescens</name>
    <dbReference type="NCBI Taxonomy" id="587669"/>
    <lineage>
        <taxon>Eukaryota</taxon>
        <taxon>Viridiplantae</taxon>
        <taxon>Streptophyta</taxon>
        <taxon>Embryophyta</taxon>
        <taxon>Tracheophyta</taxon>
        <taxon>Spermatophyta</taxon>
        <taxon>Magnoliopsida</taxon>
        <taxon>eudicotyledons</taxon>
        <taxon>Gunneridae</taxon>
        <taxon>Pentapetalae</taxon>
        <taxon>asterids</taxon>
        <taxon>lamiids</taxon>
        <taxon>Lamiales</taxon>
        <taxon>Lamiaceae</taxon>
        <taxon>Nepetoideae</taxon>
        <taxon>Ocimeae</taxon>
        <taxon>Isodoninae</taxon>
        <taxon>Isodon</taxon>
    </lineage>
</organism>
<reference key="1">
    <citation type="journal article" date="2017" name="Plant Physiol.">
        <title>Functional diversification of kaurene synthase-like genes in Isodon rubescens.</title>
        <authorList>
            <person name="Jin B."/>
            <person name="Cui G."/>
            <person name="Guo J."/>
            <person name="Tang J."/>
            <person name="Duan L."/>
            <person name="Lin H."/>
            <person name="Shen Y."/>
            <person name="Chen T."/>
            <person name="Zhang H."/>
            <person name="Huang L."/>
        </authorList>
    </citation>
    <scope>NUCLEOTIDE SEQUENCE [MRNA]</scope>
    <scope>FUNCTION</scope>
    <scope>PATHWAY</scope>
    <scope>CATALYTIC ACTIVITY</scope>
    <scope>TISSUE SPECIFICITY</scope>
</reference>
<sequence>MGIVALILIKAAMSLILSSFPLFRSSRSSPASASLAGSGLPKTTPPKTASLQSHSPMFEETKGRIAKLFKKNEVCISTYDTAWVGMVPSPFSSDQPCFPDSLFWLLDNQCPDGSWAQPHHHSHSHSPSLLNKDVLSSTLASILALHKWGLGQHHIAKGLHFLELNFASATDNSQITPLGFDIVFPAMLDHAADLSLNLRLDPTTLNDLMNRRDLELQRCTENGSAETEVYMAYIGEGMGKLHDWESVMKYQRKNGSLFNSPSTTAAAFIALRNSDCLNYLYSALNKFGSAVPAVYPLDIYSQLCIVDNLERLGISRFFSTEIQSVLDETYRCWLQGDEEIIMDASTCGLAFRTLRMNGYKVTSDSFIKVVQDCFSSPGHMRDVNTTLELYRASELMLYPHEIELEKQNSRLRSLLEQELSGGSIQSSQLNAEVKQALDYPFYAALDRMVKKKTIEHYNIDDSRILKTSFRLPSFGNKDLLSLSVQDYNRCQAIHREELREFDRWFVENRLDELEFARHKSAYYYCYFAAAATFFAPELSDARMSWAKNALMTTMVDDLFDVTGSVEEMKNLIQLVELWDVDVSTECCSHKVQILFSALKRTICEVGDRAHQLQGRSIRSHIIVIWLDLLHSMMKEVEWTRDKFVPTMDEYVSNAHVSFALGPIVLPALYLVGPKLSEEMVNHSEYHNLFKLMSMCGRLMNDIRGYEREHDDGKLNAMSLYIMNNGGEITPEVAILEIKSWNDRHRRDLLRLVLEEKSVIPKACKDLFWHMCSVVHLFYNKDDGFWSQELIEVVNQVIHQPILLNHF</sequence>
<keyword id="KW-0150">Chloroplast</keyword>
<keyword id="KW-0456">Lyase</keyword>
<keyword id="KW-0460">Magnesium</keyword>
<keyword id="KW-0479">Metal-binding</keyword>
<keyword id="KW-0934">Plastid</keyword>
<keyword id="KW-0809">Transit peptide</keyword>
<evidence type="ECO:0000250" key="1">
    <source>
        <dbReference type="UniProtKB" id="Q40577"/>
    </source>
</evidence>
<evidence type="ECO:0000255" key="2"/>
<evidence type="ECO:0000256" key="3">
    <source>
        <dbReference type="SAM" id="MobiDB-lite"/>
    </source>
</evidence>
<evidence type="ECO:0000269" key="4">
    <source>
    </source>
</evidence>
<evidence type="ECO:0000303" key="5">
    <source>
    </source>
</evidence>
<evidence type="ECO:0000305" key="6"/>
<accession>A0A1Z3GBK8</accession>
<comment type="function">
    <text evidence="4">Involved in the biosynthesis of ent-kaurene diterpenoids natural products such as oridonin, miltiradiene, eriocalyxin B and nezukol, known to exhibit antitumor, anti-inflammatory and antibacterial activities (PubMed:28381502). Catalyzes the conversion of ent-copalyl diphosphate (ent-CPP) to ent-atiserene (PubMed:28381502).</text>
</comment>
<comment type="catalytic activity">
    <reaction evidence="4">
        <text>ent-copalyl diphosphate = ent-atiserene + diphosphate</text>
        <dbReference type="Rhea" id="RHEA:54496"/>
        <dbReference type="ChEBI" id="CHEBI:33019"/>
        <dbReference type="ChEBI" id="CHEBI:58553"/>
        <dbReference type="ChEBI" id="CHEBI:138219"/>
        <dbReference type="EC" id="4.2.3.185"/>
    </reaction>
    <physiologicalReaction direction="left-to-right" evidence="4">
        <dbReference type="Rhea" id="RHEA:54497"/>
    </physiologicalReaction>
</comment>
<comment type="cofactor">
    <cofactor evidence="1">
        <name>Mg(2+)</name>
        <dbReference type="ChEBI" id="CHEBI:18420"/>
    </cofactor>
    <text evidence="1">Binds 3 Mg(2+) ions per subunit.</text>
</comment>
<comment type="pathway">
    <text evidence="4">Secondary metabolite biosynthesis; terpenoid biosynthesis.</text>
</comment>
<comment type="subcellular location">
    <subcellularLocation>
        <location evidence="2">Plastid</location>
        <location evidence="2">Chloroplast</location>
    </subcellularLocation>
</comment>
<comment type="tissue specificity">
    <text evidence="4">Highly expressed in leaves, and, at low levels, in roots, stems and flowers.</text>
</comment>
<comment type="domain">
    <text evidence="6">The Asp-Asp-Xaa-Xaa-Asp/Glu (DDXXD/E) motif is important for the catalytic activity, presumably through binding to Mg(2+).</text>
</comment>
<comment type="miscellaneous">
    <text evidence="4">Abietane diterpenoids (e.g. miltiradiene, abietatriene and ferruginol) accumulate specifically in the periderm of roots (PubMed:28381502). The ent-kaurene diterpenoid oridonin, main constituent of Isodon rubescens, accumulates in leaves (PubMed:28381502).</text>
</comment>
<comment type="similarity">
    <text evidence="6">Belongs to the terpene synthase family.</text>
</comment>
<feature type="transit peptide" description="Chloroplast" evidence="2">
    <location>
        <begin position="1"/>
        <end position="75"/>
    </location>
</feature>
<feature type="chain" id="PRO_5012509352" description="Ent-atiserene synthase KSL4, chloroplastic">
    <location>
        <begin position="76"/>
        <end position="806"/>
    </location>
</feature>
<feature type="region of interest" description="Disordered" evidence="3">
    <location>
        <begin position="33"/>
        <end position="56"/>
    </location>
</feature>
<feature type="short sequence motif" description="DDXXD motif" evidence="6">
    <location>
        <begin position="556"/>
        <end position="560"/>
    </location>
</feature>
<feature type="compositionally biased region" description="Polar residues" evidence="3">
    <location>
        <begin position="45"/>
        <end position="55"/>
    </location>
</feature>
<feature type="binding site" evidence="1">
    <location>
        <position position="556"/>
    </location>
    <ligand>
        <name>Mg(2+)</name>
        <dbReference type="ChEBI" id="CHEBI:18420"/>
        <label>1</label>
    </ligand>
</feature>
<feature type="binding site" evidence="1">
    <location>
        <position position="556"/>
    </location>
    <ligand>
        <name>Mg(2+)</name>
        <dbReference type="ChEBI" id="CHEBI:18420"/>
        <label>2</label>
    </ligand>
</feature>
<feature type="binding site" evidence="1">
    <location>
        <position position="560"/>
    </location>
    <ligand>
        <name>Mg(2+)</name>
        <dbReference type="ChEBI" id="CHEBI:18420"/>
        <label>1</label>
    </ligand>
</feature>
<feature type="binding site" evidence="1">
    <location>
        <position position="560"/>
    </location>
    <ligand>
        <name>Mg(2+)</name>
        <dbReference type="ChEBI" id="CHEBI:18420"/>
        <label>2</label>
    </ligand>
</feature>
<feature type="binding site" evidence="1">
    <location>
        <position position="700"/>
    </location>
    <ligand>
        <name>Mg(2+)</name>
        <dbReference type="ChEBI" id="CHEBI:18420"/>
        <label>3</label>
    </ligand>
</feature>
<feature type="binding site" evidence="1">
    <location>
        <position position="708"/>
    </location>
    <ligand>
        <name>Mg(2+)</name>
        <dbReference type="ChEBI" id="CHEBI:18420"/>
        <label>3</label>
    </ligand>
</feature>
<dbReference type="EC" id="4.2.3.185" evidence="4"/>
<dbReference type="EMBL" id="KX580633">
    <property type="protein sequence ID" value="ASC55316.1"/>
    <property type="molecule type" value="mRNA"/>
</dbReference>
<dbReference type="SMR" id="A0A1Z3GBK8"/>
<dbReference type="KEGG" id="ag:ASC55316"/>
<dbReference type="BRENDA" id="4.2.3.185">
    <property type="organism ID" value="15342"/>
</dbReference>
<dbReference type="UniPathway" id="UPA00213"/>
<dbReference type="GO" id="GO:0009507">
    <property type="term" value="C:chloroplast"/>
    <property type="evidence" value="ECO:0007669"/>
    <property type="project" value="UniProtKB-SubCell"/>
</dbReference>
<dbReference type="GO" id="GO:0000287">
    <property type="term" value="F:magnesium ion binding"/>
    <property type="evidence" value="ECO:0007669"/>
    <property type="project" value="InterPro"/>
</dbReference>
<dbReference type="GO" id="GO:0010333">
    <property type="term" value="F:terpene synthase activity"/>
    <property type="evidence" value="ECO:0007669"/>
    <property type="project" value="InterPro"/>
</dbReference>
<dbReference type="GO" id="GO:0009686">
    <property type="term" value="P:gibberellin biosynthetic process"/>
    <property type="evidence" value="ECO:0007669"/>
    <property type="project" value="TreeGrafter"/>
</dbReference>
<dbReference type="GO" id="GO:1901946">
    <property type="term" value="P:miltiradiene biosynthetic process"/>
    <property type="evidence" value="ECO:0000314"/>
    <property type="project" value="UniProtKB"/>
</dbReference>
<dbReference type="GO" id="GO:0016114">
    <property type="term" value="P:terpenoid biosynthetic process"/>
    <property type="evidence" value="ECO:0000314"/>
    <property type="project" value="UniProtKB"/>
</dbReference>
<dbReference type="FunFam" id="1.50.10.130:FF:000002">
    <property type="entry name" value="Ent-copalyl diphosphate synthase, chloroplastic"/>
    <property type="match status" value="1"/>
</dbReference>
<dbReference type="FunFam" id="1.10.600.10:FF:000005">
    <property type="entry name" value="Ent-kaur-16-ene synthase, chloroplastic"/>
    <property type="match status" value="1"/>
</dbReference>
<dbReference type="Gene3D" id="1.50.10.160">
    <property type="match status" value="1"/>
</dbReference>
<dbReference type="Gene3D" id="1.10.600.10">
    <property type="entry name" value="Farnesyl Diphosphate Synthase"/>
    <property type="match status" value="1"/>
</dbReference>
<dbReference type="Gene3D" id="1.50.10.130">
    <property type="entry name" value="Terpene synthase, N-terminal domain"/>
    <property type="match status" value="1"/>
</dbReference>
<dbReference type="InterPro" id="IPR008949">
    <property type="entry name" value="Isoprenoid_synthase_dom_sf"/>
</dbReference>
<dbReference type="InterPro" id="IPR001906">
    <property type="entry name" value="Terpene_synth_N"/>
</dbReference>
<dbReference type="InterPro" id="IPR036965">
    <property type="entry name" value="Terpene_synth_N_sf"/>
</dbReference>
<dbReference type="InterPro" id="IPR050148">
    <property type="entry name" value="Terpene_synthase-like"/>
</dbReference>
<dbReference type="InterPro" id="IPR005630">
    <property type="entry name" value="Terpene_synthase_metal-bd"/>
</dbReference>
<dbReference type="InterPro" id="IPR008930">
    <property type="entry name" value="Terpenoid_cyclase/PrenylTrfase"/>
</dbReference>
<dbReference type="PANTHER" id="PTHR31739">
    <property type="entry name" value="ENT-COPALYL DIPHOSPHATE SYNTHASE, CHLOROPLASTIC"/>
    <property type="match status" value="1"/>
</dbReference>
<dbReference type="PANTHER" id="PTHR31739:SF3">
    <property type="entry name" value="ENT-KAUR-16-ENE SYNTHASE, CHLOROPLASTIC"/>
    <property type="match status" value="1"/>
</dbReference>
<dbReference type="Pfam" id="PF01397">
    <property type="entry name" value="Terpene_synth"/>
    <property type="match status" value="1"/>
</dbReference>
<dbReference type="Pfam" id="PF03936">
    <property type="entry name" value="Terpene_synth_C"/>
    <property type="match status" value="1"/>
</dbReference>
<dbReference type="SFLD" id="SFLDG01014">
    <property type="entry name" value="Terpene_Cyclase_Like_1_N-term"/>
    <property type="match status" value="1"/>
</dbReference>
<dbReference type="SUPFAM" id="SSF48239">
    <property type="entry name" value="Terpenoid cyclases/Protein prenyltransferases"/>
    <property type="match status" value="2"/>
</dbReference>
<dbReference type="SUPFAM" id="SSF48576">
    <property type="entry name" value="Terpenoid synthases"/>
    <property type="match status" value="1"/>
</dbReference>
<proteinExistence type="evidence at protein level"/>
<gene>
    <name evidence="5" type="primary">KSL4</name>
</gene>